<feature type="chain" id="PRO_0000154346" description="N-(5'-phosphoribosyl)anthranilate isomerase">
    <location>
        <begin position="1"/>
        <end position="208"/>
    </location>
</feature>
<name>TRPF_PRIM1</name>
<comment type="catalytic activity">
    <reaction>
        <text>N-(5-phospho-beta-D-ribosyl)anthranilate = 1-(2-carboxyphenylamino)-1-deoxy-D-ribulose 5-phosphate</text>
        <dbReference type="Rhea" id="RHEA:21540"/>
        <dbReference type="ChEBI" id="CHEBI:18277"/>
        <dbReference type="ChEBI" id="CHEBI:58613"/>
        <dbReference type="EC" id="5.3.1.24"/>
    </reaction>
</comment>
<comment type="pathway">
    <text>Amino-acid biosynthesis; L-tryptophan biosynthesis; L-tryptophan from chorismate: step 3/5.</text>
</comment>
<comment type="similarity">
    <text evidence="1">Belongs to the TrpF family.</text>
</comment>
<evidence type="ECO:0000305" key="1"/>
<accession>P70938</accession>
<accession>D5DRF1</accession>
<reference key="1">
    <citation type="journal article" date="2011" name="J. Bacteriol.">
        <title>Genome sequences of the biotechnologically important Bacillus megaterium strains QM B1551 and DSM319.</title>
        <authorList>
            <person name="Eppinger M."/>
            <person name="Bunk B."/>
            <person name="Johns M.A."/>
            <person name="Edirisinghe J.N."/>
            <person name="Kutumbaka K.K."/>
            <person name="Koenig S.S."/>
            <person name="Creasy H.H."/>
            <person name="Rosovitz M.J."/>
            <person name="Riley D.R."/>
            <person name="Daugherty S."/>
            <person name="Martin M."/>
            <person name="Elbourne L.D."/>
            <person name="Paulsen I."/>
            <person name="Biedendieck R."/>
            <person name="Braun C."/>
            <person name="Grayburn S."/>
            <person name="Dhingra S."/>
            <person name="Lukyanchuk V."/>
            <person name="Ball B."/>
            <person name="Ul-Qamar R."/>
            <person name="Seibel J."/>
            <person name="Bremer E."/>
            <person name="Jahn D."/>
            <person name="Ravel J."/>
            <person name="Vary P.S."/>
        </authorList>
    </citation>
    <scope>NUCLEOTIDE SEQUENCE [LARGE SCALE GENOMIC DNA]</scope>
    <source>
        <strain>ATCC 12872 / DSM 1804 / QMB1551</strain>
    </source>
</reference>
<reference key="2">
    <citation type="submission" date="1996-09" db="EMBL/GenBank/DDBJ databases">
        <authorList>
            <person name="Jablonski L.M."/>
            <person name="Vary P.S."/>
            <person name="Hudspeth D.S."/>
        </authorList>
    </citation>
    <scope>NUCLEOTIDE SEQUENCE [GENOMIC DNA] OF 1-113</scope>
</reference>
<keyword id="KW-0028">Amino-acid biosynthesis</keyword>
<keyword id="KW-0057">Aromatic amino acid biosynthesis</keyword>
<keyword id="KW-0413">Isomerase</keyword>
<keyword id="KW-1185">Reference proteome</keyword>
<keyword id="KW-0822">Tryptophan biosynthesis</keyword>
<protein>
    <recommendedName>
        <fullName>N-(5'-phosphoribosyl)anthranilate isomerase</fullName>
        <shortName>PRAI</shortName>
        <ecNumber>5.3.1.24</ecNumber>
    </recommendedName>
</protein>
<sequence>MLIKYCGIRSKQDIALIEKSAATHIGFIFYPRSKRYVKPERVNEFVTDEIKKQVSLVGVFVNTPVDQILEIASVTNLDVIQCHGQETAADVRQLKQRGYEVWKALPHNKETLQQMHVYEEADGYVIDSKVKEQFGGTGVAFDWSFVPQYESAAQRLGKKCFIAGGINACNIENLLPYQPGAIDISGGIETNGTKDYTKIIEIERKIIL</sequence>
<dbReference type="EC" id="5.3.1.24"/>
<dbReference type="EMBL" id="CP001983">
    <property type="protein sequence ID" value="ADE71330.1"/>
    <property type="molecule type" value="Genomic_DNA"/>
</dbReference>
<dbReference type="EMBL" id="U67986">
    <property type="protein sequence ID" value="AAB07593.1"/>
    <property type="molecule type" value="Genomic_DNA"/>
</dbReference>
<dbReference type="RefSeq" id="WP_013059003.1">
    <property type="nucleotide sequence ID" value="NC_014019.1"/>
</dbReference>
<dbReference type="SMR" id="P70938"/>
<dbReference type="STRING" id="545693.BMQ_4320"/>
<dbReference type="KEGG" id="bmq:BMQ_4320"/>
<dbReference type="eggNOG" id="COG0135">
    <property type="taxonomic scope" value="Bacteria"/>
</dbReference>
<dbReference type="HOGENOM" id="CLU_076364_2_0_9"/>
<dbReference type="UniPathway" id="UPA00035">
    <property type="reaction ID" value="UER00042"/>
</dbReference>
<dbReference type="Proteomes" id="UP000000935">
    <property type="component" value="Chromosome"/>
</dbReference>
<dbReference type="GO" id="GO:0004640">
    <property type="term" value="F:phosphoribosylanthranilate isomerase activity"/>
    <property type="evidence" value="ECO:0007669"/>
    <property type="project" value="UniProtKB-UniRule"/>
</dbReference>
<dbReference type="GO" id="GO:0000162">
    <property type="term" value="P:L-tryptophan biosynthetic process"/>
    <property type="evidence" value="ECO:0007669"/>
    <property type="project" value="UniProtKB-UniRule"/>
</dbReference>
<dbReference type="CDD" id="cd00405">
    <property type="entry name" value="PRAI"/>
    <property type="match status" value="1"/>
</dbReference>
<dbReference type="Gene3D" id="3.20.20.70">
    <property type="entry name" value="Aldolase class I"/>
    <property type="match status" value="1"/>
</dbReference>
<dbReference type="HAMAP" id="MF_00135">
    <property type="entry name" value="PRAI"/>
    <property type="match status" value="1"/>
</dbReference>
<dbReference type="InterPro" id="IPR013785">
    <property type="entry name" value="Aldolase_TIM"/>
</dbReference>
<dbReference type="InterPro" id="IPR001240">
    <property type="entry name" value="PRAI_dom"/>
</dbReference>
<dbReference type="InterPro" id="IPR011060">
    <property type="entry name" value="RibuloseP-bd_barrel"/>
</dbReference>
<dbReference type="InterPro" id="IPR044643">
    <property type="entry name" value="TrpF_fam"/>
</dbReference>
<dbReference type="NCBIfam" id="NF002301">
    <property type="entry name" value="PRK01222.2-1"/>
    <property type="match status" value="1"/>
</dbReference>
<dbReference type="PANTHER" id="PTHR42894">
    <property type="entry name" value="N-(5'-PHOSPHORIBOSYL)ANTHRANILATE ISOMERASE"/>
    <property type="match status" value="1"/>
</dbReference>
<dbReference type="PANTHER" id="PTHR42894:SF1">
    <property type="entry name" value="N-(5'-PHOSPHORIBOSYL)ANTHRANILATE ISOMERASE"/>
    <property type="match status" value="1"/>
</dbReference>
<dbReference type="Pfam" id="PF00697">
    <property type="entry name" value="PRAI"/>
    <property type="match status" value="1"/>
</dbReference>
<dbReference type="SUPFAM" id="SSF51366">
    <property type="entry name" value="Ribulose-phoshate binding barrel"/>
    <property type="match status" value="1"/>
</dbReference>
<organism>
    <name type="scientific">Priestia megaterium (strain ATCC 12872 / QMB1551)</name>
    <name type="common">Bacillus megaterium</name>
    <dbReference type="NCBI Taxonomy" id="545693"/>
    <lineage>
        <taxon>Bacteria</taxon>
        <taxon>Bacillati</taxon>
        <taxon>Bacillota</taxon>
        <taxon>Bacilli</taxon>
        <taxon>Bacillales</taxon>
        <taxon>Bacillaceae</taxon>
        <taxon>Priestia</taxon>
    </lineage>
</organism>
<gene>
    <name type="primary">trpF</name>
    <name type="ordered locus">BMQ_4320</name>
</gene>
<proteinExistence type="inferred from homology"/>